<dbReference type="EC" id="2.1.2.9" evidence="1"/>
<dbReference type="EMBL" id="CP000783">
    <property type="protein sequence ID" value="ABU75347.1"/>
    <property type="molecule type" value="Genomic_DNA"/>
</dbReference>
<dbReference type="RefSeq" id="WP_012123588.1">
    <property type="nucleotide sequence ID" value="NC_009778.1"/>
</dbReference>
<dbReference type="SMR" id="A7MPE8"/>
<dbReference type="KEGG" id="esa:ESA_00038"/>
<dbReference type="PATRIC" id="fig|290339.8.peg.36"/>
<dbReference type="HOGENOM" id="CLU_033347_1_2_6"/>
<dbReference type="Proteomes" id="UP000000260">
    <property type="component" value="Chromosome"/>
</dbReference>
<dbReference type="GO" id="GO:0005829">
    <property type="term" value="C:cytosol"/>
    <property type="evidence" value="ECO:0007669"/>
    <property type="project" value="TreeGrafter"/>
</dbReference>
<dbReference type="GO" id="GO:0004479">
    <property type="term" value="F:methionyl-tRNA formyltransferase activity"/>
    <property type="evidence" value="ECO:0007669"/>
    <property type="project" value="UniProtKB-UniRule"/>
</dbReference>
<dbReference type="CDD" id="cd08646">
    <property type="entry name" value="FMT_core_Met-tRNA-FMT_N"/>
    <property type="match status" value="1"/>
</dbReference>
<dbReference type="CDD" id="cd08704">
    <property type="entry name" value="Met_tRNA_FMT_C"/>
    <property type="match status" value="1"/>
</dbReference>
<dbReference type="FunFam" id="3.10.25.10:FF:000001">
    <property type="entry name" value="Methionyl-tRNA formyltransferase"/>
    <property type="match status" value="1"/>
</dbReference>
<dbReference type="FunFam" id="3.40.50.170:FF:000003">
    <property type="entry name" value="Methionyl-tRNA formyltransferase"/>
    <property type="match status" value="1"/>
</dbReference>
<dbReference type="Gene3D" id="3.10.25.10">
    <property type="entry name" value="Formyl transferase, C-terminal domain"/>
    <property type="match status" value="1"/>
</dbReference>
<dbReference type="Gene3D" id="3.40.50.170">
    <property type="entry name" value="Formyl transferase, N-terminal domain"/>
    <property type="match status" value="1"/>
</dbReference>
<dbReference type="HAMAP" id="MF_00182">
    <property type="entry name" value="Formyl_trans"/>
    <property type="match status" value="1"/>
</dbReference>
<dbReference type="InterPro" id="IPR005794">
    <property type="entry name" value="Fmt"/>
</dbReference>
<dbReference type="InterPro" id="IPR005793">
    <property type="entry name" value="Formyl_trans_C"/>
</dbReference>
<dbReference type="InterPro" id="IPR037022">
    <property type="entry name" value="Formyl_trans_C_sf"/>
</dbReference>
<dbReference type="InterPro" id="IPR002376">
    <property type="entry name" value="Formyl_transf_N"/>
</dbReference>
<dbReference type="InterPro" id="IPR036477">
    <property type="entry name" value="Formyl_transf_N_sf"/>
</dbReference>
<dbReference type="InterPro" id="IPR011034">
    <property type="entry name" value="Formyl_transferase-like_C_sf"/>
</dbReference>
<dbReference type="InterPro" id="IPR001555">
    <property type="entry name" value="GART_AS"/>
</dbReference>
<dbReference type="InterPro" id="IPR044135">
    <property type="entry name" value="Met-tRNA-FMT_C"/>
</dbReference>
<dbReference type="InterPro" id="IPR041711">
    <property type="entry name" value="Met-tRNA-FMT_N"/>
</dbReference>
<dbReference type="NCBIfam" id="TIGR00460">
    <property type="entry name" value="fmt"/>
    <property type="match status" value="1"/>
</dbReference>
<dbReference type="PANTHER" id="PTHR11138">
    <property type="entry name" value="METHIONYL-TRNA FORMYLTRANSFERASE"/>
    <property type="match status" value="1"/>
</dbReference>
<dbReference type="PANTHER" id="PTHR11138:SF5">
    <property type="entry name" value="METHIONYL-TRNA FORMYLTRANSFERASE, MITOCHONDRIAL"/>
    <property type="match status" value="1"/>
</dbReference>
<dbReference type="Pfam" id="PF02911">
    <property type="entry name" value="Formyl_trans_C"/>
    <property type="match status" value="1"/>
</dbReference>
<dbReference type="Pfam" id="PF00551">
    <property type="entry name" value="Formyl_trans_N"/>
    <property type="match status" value="1"/>
</dbReference>
<dbReference type="SUPFAM" id="SSF50486">
    <property type="entry name" value="FMT C-terminal domain-like"/>
    <property type="match status" value="1"/>
</dbReference>
<dbReference type="SUPFAM" id="SSF53328">
    <property type="entry name" value="Formyltransferase"/>
    <property type="match status" value="1"/>
</dbReference>
<dbReference type="PROSITE" id="PS00373">
    <property type="entry name" value="GART"/>
    <property type="match status" value="1"/>
</dbReference>
<feature type="chain" id="PRO_1000020060" description="Methionyl-tRNA formyltransferase">
    <location>
        <begin position="1"/>
        <end position="315"/>
    </location>
</feature>
<feature type="binding site" evidence="1">
    <location>
        <begin position="113"/>
        <end position="116"/>
    </location>
    <ligand>
        <name>(6S)-5,6,7,8-tetrahydrofolate</name>
        <dbReference type="ChEBI" id="CHEBI:57453"/>
    </ligand>
</feature>
<accession>A7MPE8</accession>
<reference key="1">
    <citation type="journal article" date="2010" name="PLoS ONE">
        <title>Genome sequence of Cronobacter sakazakii BAA-894 and comparative genomic hybridization analysis with other Cronobacter species.</title>
        <authorList>
            <person name="Kucerova E."/>
            <person name="Clifton S.W."/>
            <person name="Xia X.Q."/>
            <person name="Long F."/>
            <person name="Porwollik S."/>
            <person name="Fulton L."/>
            <person name="Fronick C."/>
            <person name="Minx P."/>
            <person name="Kyung K."/>
            <person name="Warren W."/>
            <person name="Fulton R."/>
            <person name="Feng D."/>
            <person name="Wollam A."/>
            <person name="Shah N."/>
            <person name="Bhonagiri V."/>
            <person name="Nash W.E."/>
            <person name="Hallsworth-Pepin K."/>
            <person name="Wilson R.K."/>
            <person name="McClelland M."/>
            <person name="Forsythe S.J."/>
        </authorList>
    </citation>
    <scope>NUCLEOTIDE SEQUENCE [LARGE SCALE GENOMIC DNA]</scope>
    <source>
        <strain>ATCC BAA-894</strain>
    </source>
</reference>
<keyword id="KW-0648">Protein biosynthesis</keyword>
<keyword id="KW-1185">Reference proteome</keyword>
<keyword id="KW-0808">Transferase</keyword>
<sequence length="315" mass="34084">MSESLRIIFAGTPDFAARHLDALLSSSHQVVGVFTQPDRPAGRGKKLMPGPVKVLAQENDIPVFQPKSLRSAENQELVAALNADVMVVVAYGLILPEAVLSMPRLGCINVHGSLLPRWRGAAPIQRSLWAGDAETGVTIMQMDKGLDTGDMLRKLSCPITADDTSASLYDKLAQLGPQGLLATLEDLAAGRAVPEKQDDAQATYADKLSKEEARLDWTLSAAQLERCIRAFNPWPVSFFMIDEQPVKVWKASVIRQQSHATPGTILDAGKQGIQVATTDGILNLESLQPAGKKPMSAQDLLNSRREWFTPGAILA</sequence>
<comment type="function">
    <text evidence="1">Attaches a formyl group to the free amino group of methionyl-tRNA(fMet). The formyl group appears to play a dual role in the initiator identity of N-formylmethionyl-tRNA by promoting its recognition by IF2 and preventing the misappropriation of this tRNA by the elongation apparatus.</text>
</comment>
<comment type="catalytic activity">
    <reaction evidence="1">
        <text>L-methionyl-tRNA(fMet) + (6R)-10-formyltetrahydrofolate = N-formyl-L-methionyl-tRNA(fMet) + (6S)-5,6,7,8-tetrahydrofolate + H(+)</text>
        <dbReference type="Rhea" id="RHEA:24380"/>
        <dbReference type="Rhea" id="RHEA-COMP:9952"/>
        <dbReference type="Rhea" id="RHEA-COMP:9953"/>
        <dbReference type="ChEBI" id="CHEBI:15378"/>
        <dbReference type="ChEBI" id="CHEBI:57453"/>
        <dbReference type="ChEBI" id="CHEBI:78530"/>
        <dbReference type="ChEBI" id="CHEBI:78844"/>
        <dbReference type="ChEBI" id="CHEBI:195366"/>
        <dbReference type="EC" id="2.1.2.9"/>
    </reaction>
</comment>
<comment type="similarity">
    <text evidence="1">Belongs to the Fmt family.</text>
</comment>
<protein>
    <recommendedName>
        <fullName evidence="1">Methionyl-tRNA formyltransferase</fullName>
        <ecNumber evidence="1">2.1.2.9</ecNumber>
    </recommendedName>
</protein>
<proteinExistence type="inferred from homology"/>
<organism>
    <name type="scientific">Cronobacter sakazakii (strain ATCC BAA-894)</name>
    <name type="common">Enterobacter sakazakii</name>
    <dbReference type="NCBI Taxonomy" id="290339"/>
    <lineage>
        <taxon>Bacteria</taxon>
        <taxon>Pseudomonadati</taxon>
        <taxon>Pseudomonadota</taxon>
        <taxon>Gammaproteobacteria</taxon>
        <taxon>Enterobacterales</taxon>
        <taxon>Enterobacteriaceae</taxon>
        <taxon>Cronobacter</taxon>
    </lineage>
</organism>
<name>FMT_CROS8</name>
<gene>
    <name evidence="1" type="primary">fmt</name>
    <name type="ordered locus">ESA_00038</name>
</gene>
<evidence type="ECO:0000255" key="1">
    <source>
        <dbReference type="HAMAP-Rule" id="MF_00182"/>
    </source>
</evidence>